<gene>
    <name evidence="1" type="primary">ubiG</name>
    <name type="ordered locus">SAR11_0515</name>
</gene>
<proteinExistence type="inferred from homology"/>
<keyword id="KW-0489">Methyltransferase</keyword>
<keyword id="KW-1185">Reference proteome</keyword>
<keyword id="KW-0949">S-adenosyl-L-methionine</keyword>
<keyword id="KW-0808">Transferase</keyword>
<keyword id="KW-0831">Ubiquinone biosynthesis</keyword>
<name>UBIG_PELUB</name>
<sequence length="240" mass="27681">MNSINKKEIEKFSKIAEEWWDPNGKFKPLHNFNPIRIRYIKENIIKDFKIRSSDKPLKNIKLLDIGCGGGLLSEPMCRLGASVVGIDASKKNIEVAKFHAKKNKLKIDYKVASPEMLKDKKKFDVILNMEIVEHVNDIDFFIKESSKLLKKNGIMFIATLNKTLKSYVFAIVGAEYILKWLPIGTHDWEKFVKPSELIDISKKNNLSLKKLDGMNFNILDNSWKVTNDTSVNYITKFIKN</sequence>
<reference key="1">
    <citation type="journal article" date="2005" name="Science">
        <title>Genome streamlining in a cosmopolitan oceanic bacterium.</title>
        <authorList>
            <person name="Giovannoni S.J."/>
            <person name="Tripp H.J."/>
            <person name="Givan S."/>
            <person name="Podar M."/>
            <person name="Vergin K.L."/>
            <person name="Baptista D."/>
            <person name="Bibbs L."/>
            <person name="Eads J."/>
            <person name="Richardson T.H."/>
            <person name="Noordewier M."/>
            <person name="Rappe M.S."/>
            <person name="Short J.M."/>
            <person name="Carrington J.C."/>
            <person name="Mathur E.J."/>
        </authorList>
    </citation>
    <scope>NUCLEOTIDE SEQUENCE [LARGE SCALE GENOMIC DNA]</scope>
    <source>
        <strain>HTCC1062</strain>
    </source>
</reference>
<dbReference type="EC" id="2.1.1.222" evidence="1"/>
<dbReference type="EC" id="2.1.1.64" evidence="1"/>
<dbReference type="EMBL" id="CP000084">
    <property type="protein sequence ID" value="AAZ21337.1"/>
    <property type="molecule type" value="Genomic_DNA"/>
</dbReference>
<dbReference type="RefSeq" id="WP_011281767.1">
    <property type="nucleotide sequence ID" value="NC_007205.1"/>
</dbReference>
<dbReference type="SMR" id="Q4FNA2"/>
<dbReference type="STRING" id="335992.SAR11_0515"/>
<dbReference type="GeneID" id="66295017"/>
<dbReference type="KEGG" id="pub:SAR11_0515"/>
<dbReference type="eggNOG" id="COG2227">
    <property type="taxonomic scope" value="Bacteria"/>
</dbReference>
<dbReference type="HOGENOM" id="CLU_042432_0_0_5"/>
<dbReference type="OrthoDB" id="9801538at2"/>
<dbReference type="UniPathway" id="UPA00232"/>
<dbReference type="Proteomes" id="UP000002528">
    <property type="component" value="Chromosome"/>
</dbReference>
<dbReference type="GO" id="GO:0102208">
    <property type="term" value="F:2-polyprenyl-6-hydroxyphenol methylase activity"/>
    <property type="evidence" value="ECO:0007669"/>
    <property type="project" value="UniProtKB-EC"/>
</dbReference>
<dbReference type="GO" id="GO:0061542">
    <property type="term" value="F:3-demethylubiquinol 3-O-methyltransferase activity"/>
    <property type="evidence" value="ECO:0007669"/>
    <property type="project" value="UniProtKB-UniRule"/>
</dbReference>
<dbReference type="GO" id="GO:0010420">
    <property type="term" value="F:polyprenyldihydroxybenzoate methyltransferase activity"/>
    <property type="evidence" value="ECO:0007669"/>
    <property type="project" value="InterPro"/>
</dbReference>
<dbReference type="GO" id="GO:0032259">
    <property type="term" value="P:methylation"/>
    <property type="evidence" value="ECO:0007669"/>
    <property type="project" value="UniProtKB-KW"/>
</dbReference>
<dbReference type="CDD" id="cd02440">
    <property type="entry name" value="AdoMet_MTases"/>
    <property type="match status" value="1"/>
</dbReference>
<dbReference type="Gene3D" id="3.40.50.150">
    <property type="entry name" value="Vaccinia Virus protein VP39"/>
    <property type="match status" value="1"/>
</dbReference>
<dbReference type="HAMAP" id="MF_00472">
    <property type="entry name" value="UbiG"/>
    <property type="match status" value="1"/>
</dbReference>
<dbReference type="InterPro" id="IPR013216">
    <property type="entry name" value="Methyltransf_11"/>
</dbReference>
<dbReference type="InterPro" id="IPR029063">
    <property type="entry name" value="SAM-dependent_MTases_sf"/>
</dbReference>
<dbReference type="InterPro" id="IPR010233">
    <property type="entry name" value="UbiG_MeTrfase"/>
</dbReference>
<dbReference type="NCBIfam" id="TIGR01983">
    <property type="entry name" value="UbiG"/>
    <property type="match status" value="1"/>
</dbReference>
<dbReference type="PANTHER" id="PTHR43464">
    <property type="entry name" value="METHYLTRANSFERASE"/>
    <property type="match status" value="1"/>
</dbReference>
<dbReference type="PANTHER" id="PTHR43464:SF19">
    <property type="entry name" value="UBIQUINONE BIOSYNTHESIS O-METHYLTRANSFERASE, MITOCHONDRIAL"/>
    <property type="match status" value="1"/>
</dbReference>
<dbReference type="Pfam" id="PF08241">
    <property type="entry name" value="Methyltransf_11"/>
    <property type="match status" value="1"/>
</dbReference>
<dbReference type="SUPFAM" id="SSF53335">
    <property type="entry name" value="S-adenosyl-L-methionine-dependent methyltransferases"/>
    <property type="match status" value="1"/>
</dbReference>
<evidence type="ECO:0000255" key="1">
    <source>
        <dbReference type="HAMAP-Rule" id="MF_00472"/>
    </source>
</evidence>
<feature type="chain" id="PRO_0000241716" description="Ubiquinone biosynthesis O-methyltransferase">
    <location>
        <begin position="1"/>
        <end position="240"/>
    </location>
</feature>
<feature type="binding site" evidence="1">
    <location>
        <position position="36"/>
    </location>
    <ligand>
        <name>S-adenosyl-L-methionine</name>
        <dbReference type="ChEBI" id="CHEBI:59789"/>
    </ligand>
</feature>
<feature type="binding site" evidence="1">
    <location>
        <position position="66"/>
    </location>
    <ligand>
        <name>S-adenosyl-L-methionine</name>
        <dbReference type="ChEBI" id="CHEBI:59789"/>
    </ligand>
</feature>
<feature type="binding site" evidence="1">
    <location>
        <position position="87"/>
    </location>
    <ligand>
        <name>S-adenosyl-L-methionine</name>
        <dbReference type="ChEBI" id="CHEBI:59789"/>
    </ligand>
</feature>
<feature type="binding site" evidence="1">
    <location>
        <position position="129"/>
    </location>
    <ligand>
        <name>S-adenosyl-L-methionine</name>
        <dbReference type="ChEBI" id="CHEBI:59789"/>
    </ligand>
</feature>
<accession>Q4FNA2</accession>
<protein>
    <recommendedName>
        <fullName evidence="1">Ubiquinone biosynthesis O-methyltransferase</fullName>
    </recommendedName>
    <alternativeName>
        <fullName evidence="1">2-polyprenyl-6-hydroxyphenol methylase</fullName>
        <ecNumber evidence="1">2.1.1.222</ecNumber>
    </alternativeName>
    <alternativeName>
        <fullName evidence="1">3-demethylubiquinone 3-O-methyltransferase</fullName>
        <ecNumber evidence="1">2.1.1.64</ecNumber>
    </alternativeName>
</protein>
<organism>
    <name type="scientific">Pelagibacter ubique (strain HTCC1062)</name>
    <dbReference type="NCBI Taxonomy" id="335992"/>
    <lineage>
        <taxon>Bacteria</taxon>
        <taxon>Pseudomonadati</taxon>
        <taxon>Pseudomonadota</taxon>
        <taxon>Alphaproteobacteria</taxon>
        <taxon>Candidatus Pelagibacterales</taxon>
        <taxon>Candidatus Pelagibacteraceae</taxon>
        <taxon>Candidatus Pelagibacter</taxon>
    </lineage>
</organism>
<comment type="function">
    <text evidence="1">O-methyltransferase that catalyzes the 2 O-methylation steps in the ubiquinone biosynthetic pathway.</text>
</comment>
<comment type="catalytic activity">
    <reaction evidence="1">
        <text>a 3-demethylubiquinol + S-adenosyl-L-methionine = a ubiquinol + S-adenosyl-L-homocysteine + H(+)</text>
        <dbReference type="Rhea" id="RHEA:44380"/>
        <dbReference type="Rhea" id="RHEA-COMP:9566"/>
        <dbReference type="Rhea" id="RHEA-COMP:10914"/>
        <dbReference type="ChEBI" id="CHEBI:15378"/>
        <dbReference type="ChEBI" id="CHEBI:17976"/>
        <dbReference type="ChEBI" id="CHEBI:57856"/>
        <dbReference type="ChEBI" id="CHEBI:59789"/>
        <dbReference type="ChEBI" id="CHEBI:84422"/>
        <dbReference type="EC" id="2.1.1.64"/>
    </reaction>
</comment>
<comment type="catalytic activity">
    <reaction evidence="1">
        <text>a 3-(all-trans-polyprenyl)benzene-1,2-diol + S-adenosyl-L-methionine = a 2-methoxy-6-(all-trans-polyprenyl)phenol + S-adenosyl-L-homocysteine + H(+)</text>
        <dbReference type="Rhea" id="RHEA:31411"/>
        <dbReference type="Rhea" id="RHEA-COMP:9550"/>
        <dbReference type="Rhea" id="RHEA-COMP:9551"/>
        <dbReference type="ChEBI" id="CHEBI:15378"/>
        <dbReference type="ChEBI" id="CHEBI:57856"/>
        <dbReference type="ChEBI" id="CHEBI:59789"/>
        <dbReference type="ChEBI" id="CHEBI:62729"/>
        <dbReference type="ChEBI" id="CHEBI:62731"/>
        <dbReference type="EC" id="2.1.1.222"/>
    </reaction>
</comment>
<comment type="pathway">
    <text evidence="1">Cofactor biosynthesis; ubiquinone biosynthesis.</text>
</comment>
<comment type="similarity">
    <text evidence="1">Belongs to the methyltransferase superfamily. UbiG/COQ3 family.</text>
</comment>